<proteinExistence type="evidence at protein level"/>
<reference key="1">
    <citation type="journal article" date="2000" name="Antimicrob. Agents Chemother.">
        <title>Identification of the novobiocin biosynthetic gene cluster of Streptomyces spheroides NCIB 11891.</title>
        <authorList>
            <person name="Steffensky M."/>
            <person name="Muhlenweg A."/>
            <person name="Wang Z.X."/>
            <person name="Li S.M."/>
            <person name="Heide L."/>
        </authorList>
    </citation>
    <scope>NUCLEOTIDE SEQUENCE [GENOMIC DNA]</scope>
    <source>
        <strain>ATCC 23965 / DSM 40292 / JCM 4252 / NBRC 12917 / NCIMB 11891 / NRRL 2449</strain>
    </source>
</reference>
<reference key="2">
    <citation type="journal article" date="2005" name="Biochemistry">
        <title>NovJ/NovK catalyze benzylic oxidation of a beta-hydroxyl tyrosyl-S-pantetheinyl enzyme during aminocoumarin ring formation in novobiocin biosynthesis.</title>
        <authorList>
            <person name="Pacholec M."/>
            <person name="Hillson N.J."/>
            <person name="Walsh C.T."/>
        </authorList>
    </citation>
    <scope>FUNCTION</scope>
    <scope>SUBUNIT</scope>
    <scope>PATHWAY</scope>
    <source>
        <strain>ATCC 23965 / DSM 40292 / JCM 4252 / NBRC 12917 / NCIMB 11891 / NRRL 2449</strain>
    </source>
</reference>
<comment type="function">
    <text evidence="2">Non-catalytic subunit of the NovJ(2)K(2) heterotetramer that catalyzes the NADPH-dependent reduction of the tyrosyl moiety of L-beta-OH-Tyr-S-NovH intermediate to yield the tethered beta-ketotyrosyl-S-NovH in the novobiocin biosynthesis pathway. Novobiocin is an aminocoumarin family antibiotic that targets bacterial DNA gyrases.</text>
</comment>
<comment type="pathway">
    <text evidence="2">Antibiotic biosynthesis; novobiocin biosynthesis.</text>
</comment>
<comment type="subunit">
    <text evidence="2">Heterotetramer; the NovJ(2)K(2) heterotetramer is composed of subunits of 2 NovJ and 2 subunits of NovK.</text>
</comment>
<comment type="similarity">
    <text evidence="3">Belongs to the short-chain dehydrogenases/reductases (SDR) family.</text>
</comment>
<feature type="chain" id="PRO_0000423996" description="Short-chain dehydrogenase/reductase family member NovK">
    <location>
        <begin position="1"/>
        <end position="244"/>
    </location>
</feature>
<feature type="binding site" evidence="1">
    <location>
        <begin position="9"/>
        <end position="12"/>
    </location>
    <ligand>
        <name>NADP(+)</name>
        <dbReference type="ChEBI" id="CHEBI:58349"/>
    </ligand>
</feature>
<feature type="binding site" evidence="1">
    <location>
        <begin position="59"/>
        <end position="60"/>
    </location>
    <ligand>
        <name>NADP(+)</name>
        <dbReference type="ChEBI" id="CHEBI:58349"/>
    </ligand>
</feature>
<feature type="binding site" evidence="1">
    <location>
        <begin position="154"/>
        <end position="158"/>
    </location>
    <ligand>
        <name>NADP(+)</name>
        <dbReference type="ChEBI" id="CHEBI:58349"/>
    </ligand>
</feature>
<gene>
    <name type="primary">novK</name>
</gene>
<name>NOVK_STRNV</name>
<evidence type="ECO:0000250" key="1"/>
<evidence type="ECO:0000269" key="2">
    <source>
    </source>
</evidence>
<evidence type="ECO:0000305" key="3"/>
<accession>Q9L9F7</accession>
<protein>
    <recommendedName>
        <fullName>Short-chain dehydrogenase/reductase family member NovK</fullName>
    </recommendedName>
    <alternativeName>
        <fullName>Novobiocin biosynthesis protein K</fullName>
    </alternativeName>
</protein>
<dbReference type="EMBL" id="AF170880">
    <property type="protein sequence ID" value="AAF67504.1"/>
    <property type="molecule type" value="Genomic_DNA"/>
</dbReference>
<dbReference type="RefSeq" id="WP_079127918.1">
    <property type="nucleotide sequence ID" value="NZ_MDCR01000039.1"/>
</dbReference>
<dbReference type="SMR" id="Q9L9F7"/>
<dbReference type="KEGG" id="ag:AAF67504"/>
<dbReference type="BioCyc" id="MetaCyc:MONOMER-18083"/>
<dbReference type="UniPathway" id="UPA01035"/>
<dbReference type="GO" id="GO:0043642">
    <property type="term" value="P:novobiocin biosynthetic process"/>
    <property type="evidence" value="ECO:0000314"/>
    <property type="project" value="UniProtKB"/>
</dbReference>
<dbReference type="FunFam" id="3.40.50.720:FF:001577">
    <property type="entry name" value="Short-chain dehydrogenase/reductase family member NovK"/>
    <property type="match status" value="1"/>
</dbReference>
<dbReference type="Gene3D" id="3.40.50.720">
    <property type="entry name" value="NAD(P)-binding Rossmann-like Domain"/>
    <property type="match status" value="1"/>
</dbReference>
<dbReference type="InterPro" id="IPR036291">
    <property type="entry name" value="NAD(P)-bd_dom_sf"/>
</dbReference>
<dbReference type="InterPro" id="IPR050259">
    <property type="entry name" value="SDR"/>
</dbReference>
<dbReference type="InterPro" id="IPR002347">
    <property type="entry name" value="SDR_fam"/>
</dbReference>
<dbReference type="PANTHER" id="PTHR42879">
    <property type="entry name" value="3-OXOACYL-(ACYL-CARRIER-PROTEIN) REDUCTASE"/>
    <property type="match status" value="1"/>
</dbReference>
<dbReference type="PANTHER" id="PTHR42879:SF2">
    <property type="entry name" value="3-OXOACYL-[ACYL-CARRIER-PROTEIN] REDUCTASE FABG"/>
    <property type="match status" value="1"/>
</dbReference>
<dbReference type="Pfam" id="PF00106">
    <property type="entry name" value="adh_short"/>
    <property type="match status" value="1"/>
</dbReference>
<dbReference type="PRINTS" id="PR00081">
    <property type="entry name" value="GDHRDH"/>
</dbReference>
<dbReference type="SUPFAM" id="SSF51735">
    <property type="entry name" value="NAD(P)-binding Rossmann-fold domains"/>
    <property type="match status" value="1"/>
</dbReference>
<sequence length="244" mass="25632">MTRVAVVAGGGEHTGPAVALRLAAGGFDVALLGSEFTSADKTVRRVEEYGRQCVTVRAELSDARSVAVAFGRVRTALSGPAVLVTCVGPQPLPDGLPEDESADEQRYTAVRRALRPVFVCCQAGAGQLLRHRWGRIIIVTEPADADGNTWRTSRPVLDGLIGFTRSAALELARSGTTVNLVAPADRAADSRAPAHRAAGDDSAGSYADGVAHVTEFLVDERAVGITGQAIRVAARADVPLLRER</sequence>
<keyword id="KW-0045">Antibiotic biosynthesis</keyword>
<keyword id="KW-0521">NADP</keyword>
<organism>
    <name type="scientific">Streptomyces niveus</name>
    <name type="common">Streptomyces spheroides</name>
    <dbReference type="NCBI Taxonomy" id="193462"/>
    <lineage>
        <taxon>Bacteria</taxon>
        <taxon>Bacillati</taxon>
        <taxon>Actinomycetota</taxon>
        <taxon>Actinomycetes</taxon>
        <taxon>Kitasatosporales</taxon>
        <taxon>Streptomycetaceae</taxon>
        <taxon>Streptomyces</taxon>
    </lineage>
</organism>